<dbReference type="EMBL" id="AE009441">
    <property type="protein sequence ID" value="AAL62999.1"/>
    <property type="molecule type" value="Genomic_DNA"/>
</dbReference>
<dbReference type="RefSeq" id="WP_011007471.1">
    <property type="nucleotide sequence ID" value="NC_003364.1"/>
</dbReference>
<dbReference type="SMR" id="Q8ZYJ4"/>
<dbReference type="FunCoup" id="Q8ZYJ4">
    <property type="interactions" value="22"/>
</dbReference>
<dbReference type="STRING" id="178306.PAE0745"/>
<dbReference type="EnsemblBacteria" id="AAL62999">
    <property type="protein sequence ID" value="AAL62999"/>
    <property type="gene ID" value="PAE0745"/>
</dbReference>
<dbReference type="GeneID" id="1465226"/>
<dbReference type="KEGG" id="pai:PAE0745"/>
<dbReference type="PATRIC" id="fig|178306.9.peg.544"/>
<dbReference type="eggNOG" id="arCOG01336">
    <property type="taxonomic scope" value="Archaea"/>
</dbReference>
<dbReference type="HOGENOM" id="CLU_095686_1_1_2"/>
<dbReference type="InParanoid" id="Q8ZYJ4"/>
<dbReference type="Proteomes" id="UP000002439">
    <property type="component" value="Chromosome"/>
</dbReference>
<dbReference type="Gene3D" id="3.30.700.20">
    <property type="entry name" value="Hypothetical protein ph0010, domain 1"/>
    <property type="match status" value="1"/>
</dbReference>
<dbReference type="Gene3D" id="3.30.1490.150">
    <property type="entry name" value="Hypothetical protein ph0010, domain 2"/>
    <property type="match status" value="1"/>
</dbReference>
<dbReference type="HAMAP" id="MF_00645">
    <property type="entry name" value="AMMECR1"/>
    <property type="match status" value="1"/>
</dbReference>
<dbReference type="InterPro" id="IPR023473">
    <property type="entry name" value="AMMECR1"/>
</dbReference>
<dbReference type="InterPro" id="IPR036071">
    <property type="entry name" value="AMMECR1_dom_sf"/>
</dbReference>
<dbReference type="InterPro" id="IPR002733">
    <property type="entry name" value="AMMECR1_domain"/>
</dbReference>
<dbReference type="InterPro" id="IPR027485">
    <property type="entry name" value="AMMECR1_N"/>
</dbReference>
<dbReference type="InterPro" id="IPR027623">
    <property type="entry name" value="AmmeMemoSam_A"/>
</dbReference>
<dbReference type="InterPro" id="IPR023472">
    <property type="entry name" value="Uncharacterised_MJ0810"/>
</dbReference>
<dbReference type="NCBIfam" id="TIGR04335">
    <property type="entry name" value="AmmeMemoSam_A"/>
    <property type="match status" value="1"/>
</dbReference>
<dbReference type="NCBIfam" id="TIGR00296">
    <property type="entry name" value="TIGR00296 family protein"/>
    <property type="match status" value="1"/>
</dbReference>
<dbReference type="PANTHER" id="PTHR13016:SF0">
    <property type="entry name" value="AMME SYNDROME CANDIDATE GENE 1 PROTEIN"/>
    <property type="match status" value="1"/>
</dbReference>
<dbReference type="PANTHER" id="PTHR13016">
    <property type="entry name" value="AMMECR1 HOMOLOG"/>
    <property type="match status" value="1"/>
</dbReference>
<dbReference type="Pfam" id="PF01871">
    <property type="entry name" value="AMMECR1"/>
    <property type="match status" value="1"/>
</dbReference>
<dbReference type="SUPFAM" id="SSF143447">
    <property type="entry name" value="AMMECR1-like"/>
    <property type="match status" value="1"/>
</dbReference>
<dbReference type="PROSITE" id="PS51112">
    <property type="entry name" value="AMMECR1"/>
    <property type="match status" value="1"/>
</dbReference>
<evidence type="ECO:0000255" key="1">
    <source>
        <dbReference type="HAMAP-Rule" id="MF_00645"/>
    </source>
</evidence>
<sequence length="213" mass="24437">MFRPYSLEEGTFLVRLARAVVEKYLTTGRIEVPESVFPKLLSDNYGVFTTIESIHGDKYELRGCIGYPEGYRNTLYATVFSAIGACCQDPRFPALRREELASVIFEVSILSPLNLLEVDPRKYPEIIEVGRHGLVVKRGPYSGLLLPQVPVEECWSPEEFLMHTCIKAWLPGDCWLDKKTKLYIYEAQIFREKSPGGEVYERDLVSEFARCQR</sequence>
<reference key="1">
    <citation type="journal article" date="2002" name="Proc. Natl. Acad. Sci. U.S.A.">
        <title>Genome sequence of the hyperthermophilic crenarchaeon Pyrobaculum aerophilum.</title>
        <authorList>
            <person name="Fitz-Gibbon S.T."/>
            <person name="Ladner H."/>
            <person name="Kim U.-J."/>
            <person name="Stetter K.O."/>
            <person name="Simon M.I."/>
            <person name="Miller J.H."/>
        </authorList>
    </citation>
    <scope>NUCLEOTIDE SEQUENCE [LARGE SCALE GENOMIC DNA]</scope>
    <source>
        <strain>ATCC 51768 / DSM 7523 / JCM 9630 / CIP 104966 / NBRC 100827 / IM2</strain>
    </source>
</reference>
<proteinExistence type="inferred from homology"/>
<gene>
    <name type="ordered locus">PAE0745</name>
</gene>
<keyword id="KW-1185">Reference proteome</keyword>
<name>Y745_PYRAE</name>
<feature type="chain" id="PRO_0000142383" description="Protein PAE0745">
    <location>
        <begin position="1"/>
        <end position="213"/>
    </location>
</feature>
<feature type="domain" description="AMMECR1" evidence="1">
    <location>
        <begin position="8"/>
        <end position="201"/>
    </location>
</feature>
<organism>
    <name type="scientific">Pyrobaculum aerophilum (strain ATCC 51768 / DSM 7523 / JCM 9630 / CIP 104966 / NBRC 100827 / IM2)</name>
    <dbReference type="NCBI Taxonomy" id="178306"/>
    <lineage>
        <taxon>Archaea</taxon>
        <taxon>Thermoproteota</taxon>
        <taxon>Thermoprotei</taxon>
        <taxon>Thermoproteales</taxon>
        <taxon>Thermoproteaceae</taxon>
        <taxon>Pyrobaculum</taxon>
    </lineage>
</organism>
<protein>
    <recommendedName>
        <fullName evidence="1">Protein PAE0745</fullName>
    </recommendedName>
</protein>
<accession>Q8ZYJ4</accession>